<comment type="function">
    <text evidence="1">Allows the formation of correctly charged Asn-tRNA(Asn) or Gln-tRNA(Gln) through the transamidation of misacylated Asp-tRNA(Asn) or Glu-tRNA(Gln) in organisms which lack either or both of asparaginyl-tRNA or glutaminyl-tRNA synthetases. The reaction takes place in the presence of glutamine and ATP through an activated phospho-Asp-tRNA(Asn) or phospho-Glu-tRNA(Gln).</text>
</comment>
<comment type="catalytic activity">
    <reaction evidence="1">
        <text>L-glutamyl-tRNA(Gln) + L-glutamine + ATP + H2O = L-glutaminyl-tRNA(Gln) + L-glutamate + ADP + phosphate + H(+)</text>
        <dbReference type="Rhea" id="RHEA:17521"/>
        <dbReference type="Rhea" id="RHEA-COMP:9681"/>
        <dbReference type="Rhea" id="RHEA-COMP:9684"/>
        <dbReference type="ChEBI" id="CHEBI:15377"/>
        <dbReference type="ChEBI" id="CHEBI:15378"/>
        <dbReference type="ChEBI" id="CHEBI:29985"/>
        <dbReference type="ChEBI" id="CHEBI:30616"/>
        <dbReference type="ChEBI" id="CHEBI:43474"/>
        <dbReference type="ChEBI" id="CHEBI:58359"/>
        <dbReference type="ChEBI" id="CHEBI:78520"/>
        <dbReference type="ChEBI" id="CHEBI:78521"/>
        <dbReference type="ChEBI" id="CHEBI:456216"/>
    </reaction>
</comment>
<comment type="catalytic activity">
    <reaction evidence="1">
        <text>L-aspartyl-tRNA(Asn) + L-glutamine + ATP + H2O = L-asparaginyl-tRNA(Asn) + L-glutamate + ADP + phosphate + 2 H(+)</text>
        <dbReference type="Rhea" id="RHEA:14513"/>
        <dbReference type="Rhea" id="RHEA-COMP:9674"/>
        <dbReference type="Rhea" id="RHEA-COMP:9677"/>
        <dbReference type="ChEBI" id="CHEBI:15377"/>
        <dbReference type="ChEBI" id="CHEBI:15378"/>
        <dbReference type="ChEBI" id="CHEBI:29985"/>
        <dbReference type="ChEBI" id="CHEBI:30616"/>
        <dbReference type="ChEBI" id="CHEBI:43474"/>
        <dbReference type="ChEBI" id="CHEBI:58359"/>
        <dbReference type="ChEBI" id="CHEBI:78515"/>
        <dbReference type="ChEBI" id="CHEBI:78516"/>
        <dbReference type="ChEBI" id="CHEBI:456216"/>
    </reaction>
</comment>
<comment type="subunit">
    <text evidence="1">Heterotrimer of A, B and C subunits.</text>
</comment>
<comment type="similarity">
    <text evidence="1">Belongs to the GatC family.</text>
</comment>
<feature type="chain" id="PRO_1000016087" description="Aspartyl/glutamyl-tRNA(Asn/Gln) amidotransferase subunit C">
    <location>
        <begin position="1"/>
        <end position="99"/>
    </location>
</feature>
<reference key="1">
    <citation type="journal article" date="2010" name="Genome Biol. Evol.">
        <title>Continuing evolution of Burkholderia mallei through genome reduction and large-scale rearrangements.</title>
        <authorList>
            <person name="Losada L."/>
            <person name="Ronning C.M."/>
            <person name="DeShazer D."/>
            <person name="Woods D."/>
            <person name="Fedorova N."/>
            <person name="Kim H.S."/>
            <person name="Shabalina S.A."/>
            <person name="Pearson T.R."/>
            <person name="Brinkac L."/>
            <person name="Tan P."/>
            <person name="Nandi T."/>
            <person name="Crabtree J."/>
            <person name="Badger J."/>
            <person name="Beckstrom-Sternberg S."/>
            <person name="Saqib M."/>
            <person name="Schutzer S.E."/>
            <person name="Keim P."/>
            <person name="Nierman W.C."/>
        </authorList>
    </citation>
    <scope>NUCLEOTIDE SEQUENCE [LARGE SCALE GENOMIC DNA]</scope>
    <source>
        <strain>NCTC 10229</strain>
    </source>
</reference>
<name>GATC_BURM9</name>
<proteinExistence type="inferred from homology"/>
<dbReference type="EC" id="6.3.5.-" evidence="1"/>
<dbReference type="EMBL" id="CP000546">
    <property type="protein sequence ID" value="ABN01625.1"/>
    <property type="molecule type" value="Genomic_DNA"/>
</dbReference>
<dbReference type="RefSeq" id="WP_004189769.1">
    <property type="nucleotide sequence ID" value="NC_008836.1"/>
</dbReference>
<dbReference type="SMR" id="A2S8I8"/>
<dbReference type="GeneID" id="93058695"/>
<dbReference type="KEGG" id="bml:BMA10229_A2295"/>
<dbReference type="HOGENOM" id="CLU_105899_2_2_4"/>
<dbReference type="Proteomes" id="UP000002283">
    <property type="component" value="Chromosome I"/>
</dbReference>
<dbReference type="GO" id="GO:0050566">
    <property type="term" value="F:asparaginyl-tRNA synthase (glutamine-hydrolyzing) activity"/>
    <property type="evidence" value="ECO:0007669"/>
    <property type="project" value="RHEA"/>
</dbReference>
<dbReference type="GO" id="GO:0005524">
    <property type="term" value="F:ATP binding"/>
    <property type="evidence" value="ECO:0007669"/>
    <property type="project" value="UniProtKB-KW"/>
</dbReference>
<dbReference type="GO" id="GO:0050567">
    <property type="term" value="F:glutaminyl-tRNA synthase (glutamine-hydrolyzing) activity"/>
    <property type="evidence" value="ECO:0007669"/>
    <property type="project" value="UniProtKB-UniRule"/>
</dbReference>
<dbReference type="GO" id="GO:0070681">
    <property type="term" value="P:glutaminyl-tRNAGln biosynthesis via transamidation"/>
    <property type="evidence" value="ECO:0007669"/>
    <property type="project" value="TreeGrafter"/>
</dbReference>
<dbReference type="GO" id="GO:0006450">
    <property type="term" value="P:regulation of translational fidelity"/>
    <property type="evidence" value="ECO:0007669"/>
    <property type="project" value="InterPro"/>
</dbReference>
<dbReference type="GO" id="GO:0006412">
    <property type="term" value="P:translation"/>
    <property type="evidence" value="ECO:0007669"/>
    <property type="project" value="UniProtKB-UniRule"/>
</dbReference>
<dbReference type="Gene3D" id="1.10.20.60">
    <property type="entry name" value="Glu-tRNAGln amidotransferase C subunit, N-terminal domain"/>
    <property type="match status" value="1"/>
</dbReference>
<dbReference type="HAMAP" id="MF_00122">
    <property type="entry name" value="GatC"/>
    <property type="match status" value="1"/>
</dbReference>
<dbReference type="InterPro" id="IPR036113">
    <property type="entry name" value="Asp/Glu-ADT_sf_sub_c"/>
</dbReference>
<dbReference type="InterPro" id="IPR003837">
    <property type="entry name" value="GatC"/>
</dbReference>
<dbReference type="NCBIfam" id="TIGR00135">
    <property type="entry name" value="gatC"/>
    <property type="match status" value="1"/>
</dbReference>
<dbReference type="PANTHER" id="PTHR15004">
    <property type="entry name" value="GLUTAMYL-TRNA(GLN) AMIDOTRANSFERASE SUBUNIT C, MITOCHONDRIAL"/>
    <property type="match status" value="1"/>
</dbReference>
<dbReference type="PANTHER" id="PTHR15004:SF0">
    <property type="entry name" value="GLUTAMYL-TRNA(GLN) AMIDOTRANSFERASE SUBUNIT C, MITOCHONDRIAL"/>
    <property type="match status" value="1"/>
</dbReference>
<dbReference type="Pfam" id="PF02686">
    <property type="entry name" value="GatC"/>
    <property type="match status" value="1"/>
</dbReference>
<dbReference type="SUPFAM" id="SSF141000">
    <property type="entry name" value="Glu-tRNAGln amidotransferase C subunit"/>
    <property type="match status" value="1"/>
</dbReference>
<protein>
    <recommendedName>
        <fullName evidence="1">Aspartyl/glutamyl-tRNA(Asn/Gln) amidotransferase subunit C</fullName>
        <shortName evidence="1">Asp/Glu-ADT subunit C</shortName>
        <ecNumber evidence="1">6.3.5.-</ecNumber>
    </recommendedName>
</protein>
<accession>A2S8I8</accession>
<gene>
    <name evidence="1" type="primary">gatC</name>
    <name type="ordered locus">BMA10229_A2295</name>
</gene>
<sequence length="99" mass="11030">MALTLTDVTRIAHLARLEMADADAERTLTQLNEFFGLVEQMQAVDTTGIAPLAHPIEQILEVAQRLREDAVTEHVNRDDNQRPAPAVQDGLYLVPKVIE</sequence>
<organism>
    <name type="scientific">Burkholderia mallei (strain NCTC 10229)</name>
    <dbReference type="NCBI Taxonomy" id="412022"/>
    <lineage>
        <taxon>Bacteria</taxon>
        <taxon>Pseudomonadati</taxon>
        <taxon>Pseudomonadota</taxon>
        <taxon>Betaproteobacteria</taxon>
        <taxon>Burkholderiales</taxon>
        <taxon>Burkholderiaceae</taxon>
        <taxon>Burkholderia</taxon>
        <taxon>pseudomallei group</taxon>
    </lineage>
</organism>
<evidence type="ECO:0000255" key="1">
    <source>
        <dbReference type="HAMAP-Rule" id="MF_00122"/>
    </source>
</evidence>
<keyword id="KW-0067">ATP-binding</keyword>
<keyword id="KW-0436">Ligase</keyword>
<keyword id="KW-0547">Nucleotide-binding</keyword>
<keyword id="KW-0648">Protein biosynthesis</keyword>